<dbReference type="EMBL" id="AF004099">
    <property type="protein sequence ID" value="AAB82413.1"/>
    <property type="molecule type" value="Genomic_DNA"/>
</dbReference>
<dbReference type="EMBL" id="AF003747">
    <property type="protein sequence ID" value="AAB82593.1"/>
    <property type="molecule type" value="mRNA"/>
</dbReference>
<dbReference type="EMBL" id="AF004098">
    <property type="protein sequence ID" value="AAB82412.1"/>
    <property type="molecule type" value="Genomic_DNA"/>
</dbReference>
<dbReference type="EMBL" id="AF004097">
    <property type="protein sequence ID" value="AAB82411.1"/>
    <property type="molecule type" value="Genomic_DNA"/>
</dbReference>
<dbReference type="EMBL" id="AF004100">
    <property type="protein sequence ID" value="AAB82414.1"/>
    <property type="molecule type" value="Genomic_DNA"/>
</dbReference>
<dbReference type="EMBL" id="AK134245">
    <property type="protein sequence ID" value="BAE22062.1"/>
    <property type="molecule type" value="mRNA"/>
</dbReference>
<dbReference type="EMBL" id="AL772253">
    <property type="status" value="NOT_ANNOTATED_CDS"/>
    <property type="molecule type" value="Genomic_DNA"/>
</dbReference>
<dbReference type="CCDS" id="CCDS16667.1"/>
<dbReference type="RefSeq" id="NP_001277922.1">
    <property type="nucleotide sequence ID" value="NM_001290993.1"/>
</dbReference>
<dbReference type="RefSeq" id="NP_035904.2">
    <property type="nucleotide sequence ID" value="NM_011774.3"/>
</dbReference>
<dbReference type="SMR" id="O35149"/>
<dbReference type="BioGRID" id="204706">
    <property type="interactions" value="2"/>
</dbReference>
<dbReference type="FunCoup" id="O35149">
    <property type="interactions" value="367"/>
</dbReference>
<dbReference type="IntAct" id="O35149">
    <property type="interactions" value="3"/>
</dbReference>
<dbReference type="STRING" id="10090.ENSMUSP00000005952"/>
<dbReference type="TCDB" id="2.A.4.3.3">
    <property type="family name" value="the cation diffusion facilitator (cdf) family"/>
</dbReference>
<dbReference type="iPTMnet" id="O35149"/>
<dbReference type="PhosphoSitePlus" id="O35149"/>
<dbReference type="PaxDb" id="10090-ENSMUSP00000005952"/>
<dbReference type="ProteomicsDB" id="275045"/>
<dbReference type="Pumba" id="O35149"/>
<dbReference type="Antibodypedia" id="11839">
    <property type="antibodies" value="66 antibodies from 21 providers"/>
</dbReference>
<dbReference type="DNASU" id="22785"/>
<dbReference type="Ensembl" id="ENSMUST00000005952.11">
    <property type="protein sequence ID" value="ENSMUSP00000005952.5"/>
    <property type="gene ID" value="ENSMUSG00000005802.13"/>
</dbReference>
<dbReference type="GeneID" id="22785"/>
<dbReference type="KEGG" id="mmu:22785"/>
<dbReference type="UCSC" id="uc008mba.2">
    <property type="organism name" value="mouse"/>
</dbReference>
<dbReference type="AGR" id="MGI:1345282"/>
<dbReference type="CTD" id="7782"/>
<dbReference type="MGI" id="MGI:1345282">
    <property type="gene designation" value="Slc30a4"/>
</dbReference>
<dbReference type="VEuPathDB" id="HostDB:ENSMUSG00000005802"/>
<dbReference type="eggNOG" id="KOG1482">
    <property type="taxonomic scope" value="Eukaryota"/>
</dbReference>
<dbReference type="GeneTree" id="ENSGT00940000157545"/>
<dbReference type="HOGENOM" id="CLU_013430_0_1_1"/>
<dbReference type="InParanoid" id="O35149"/>
<dbReference type="OMA" id="PCDNCNK"/>
<dbReference type="OrthoDB" id="9944568at2759"/>
<dbReference type="PhylomeDB" id="O35149"/>
<dbReference type="TreeFam" id="TF313382"/>
<dbReference type="BioGRID-ORCS" id="22785">
    <property type="hits" value="6 hits in 78 CRISPR screens"/>
</dbReference>
<dbReference type="PRO" id="PR:O35149"/>
<dbReference type="Proteomes" id="UP000000589">
    <property type="component" value="Chromosome 2"/>
</dbReference>
<dbReference type="RNAct" id="O35149">
    <property type="molecule type" value="protein"/>
</dbReference>
<dbReference type="Bgee" id="ENSMUSG00000005802">
    <property type="expression patterns" value="Expressed in jejunum and 65 other cell types or tissues"/>
</dbReference>
<dbReference type="ExpressionAtlas" id="O35149">
    <property type="expression patterns" value="baseline and differential"/>
</dbReference>
<dbReference type="GO" id="GO:0010008">
    <property type="term" value="C:endosome membrane"/>
    <property type="evidence" value="ECO:0000250"/>
    <property type="project" value="UniProtKB"/>
</dbReference>
<dbReference type="GO" id="GO:0031902">
    <property type="term" value="C:late endosome membrane"/>
    <property type="evidence" value="ECO:0007669"/>
    <property type="project" value="UniProtKB-SubCell"/>
</dbReference>
<dbReference type="GO" id="GO:0005765">
    <property type="term" value="C:lysosomal membrane"/>
    <property type="evidence" value="ECO:0007669"/>
    <property type="project" value="UniProtKB-SubCell"/>
</dbReference>
<dbReference type="GO" id="GO:0015297">
    <property type="term" value="F:antiporter activity"/>
    <property type="evidence" value="ECO:0007669"/>
    <property type="project" value="UniProtKB-KW"/>
</dbReference>
<dbReference type="GO" id="GO:0046872">
    <property type="term" value="F:metal ion binding"/>
    <property type="evidence" value="ECO:0007669"/>
    <property type="project" value="UniProtKB-KW"/>
</dbReference>
<dbReference type="GO" id="GO:0005385">
    <property type="term" value="F:zinc ion transmembrane transporter activity"/>
    <property type="evidence" value="ECO:0000314"/>
    <property type="project" value="UniProtKB"/>
</dbReference>
<dbReference type="GO" id="GO:0009636">
    <property type="term" value="P:response to toxic substance"/>
    <property type="evidence" value="ECO:0007669"/>
    <property type="project" value="Ensembl"/>
</dbReference>
<dbReference type="GO" id="GO:0140882">
    <property type="term" value="P:zinc export across plasma membrane"/>
    <property type="evidence" value="ECO:0000315"/>
    <property type="project" value="MGI"/>
</dbReference>
<dbReference type="GO" id="GO:0140916">
    <property type="term" value="P:zinc ion import into lysosome"/>
    <property type="evidence" value="ECO:0007669"/>
    <property type="project" value="Ensembl"/>
</dbReference>
<dbReference type="GO" id="GO:0071577">
    <property type="term" value="P:zinc ion transmembrane transport"/>
    <property type="evidence" value="ECO:0000314"/>
    <property type="project" value="UniProtKB"/>
</dbReference>
<dbReference type="FunFam" id="1.20.1510.10:FF:000017">
    <property type="entry name" value="zinc transporter 4 isoform X1"/>
    <property type="match status" value="1"/>
</dbReference>
<dbReference type="Gene3D" id="1.20.1510.10">
    <property type="entry name" value="Cation efflux protein transmembrane domain"/>
    <property type="match status" value="1"/>
</dbReference>
<dbReference type="InterPro" id="IPR002524">
    <property type="entry name" value="Cation_efflux"/>
</dbReference>
<dbReference type="InterPro" id="IPR027469">
    <property type="entry name" value="Cation_efflux_TMD_sf"/>
</dbReference>
<dbReference type="InterPro" id="IPR050681">
    <property type="entry name" value="CDF/SLC30A"/>
</dbReference>
<dbReference type="NCBIfam" id="TIGR01297">
    <property type="entry name" value="CDF"/>
    <property type="match status" value="1"/>
</dbReference>
<dbReference type="PANTHER" id="PTHR11562">
    <property type="entry name" value="CATION EFFLUX PROTEIN/ ZINC TRANSPORTER"/>
    <property type="match status" value="1"/>
</dbReference>
<dbReference type="PANTHER" id="PTHR11562:SF27">
    <property type="entry name" value="PROTON-COUPLED ZINC ANTIPORTER SLC30A4-RELATED"/>
    <property type="match status" value="1"/>
</dbReference>
<dbReference type="Pfam" id="PF01545">
    <property type="entry name" value="Cation_efflux"/>
    <property type="match status" value="1"/>
</dbReference>
<dbReference type="SUPFAM" id="SSF161111">
    <property type="entry name" value="Cation efflux protein transmembrane domain-like"/>
    <property type="match status" value="1"/>
</dbReference>
<proteinExistence type="evidence at protein level"/>
<feature type="chain" id="PRO_0000206100" description="Probable proton-coupled zinc antiporter SLC30A4">
    <location>
        <begin position="1"/>
        <end position="430"/>
    </location>
</feature>
<feature type="topological domain" description="Cytoplasmic" evidence="8">
    <location>
        <begin position="1"/>
        <end position="113"/>
    </location>
</feature>
<feature type="transmembrane region" description="Helical" evidence="4">
    <location>
        <begin position="114"/>
        <end position="134"/>
    </location>
</feature>
<feature type="topological domain" description="Lumenal" evidence="8">
    <location>
        <begin position="135"/>
        <end position="143"/>
    </location>
</feature>
<feature type="transmembrane region" description="Helical" evidence="4">
    <location>
        <begin position="144"/>
        <end position="164"/>
    </location>
</feature>
<feature type="topological domain" description="Cytoplasmic" evidence="8">
    <location>
        <begin position="165"/>
        <end position="178"/>
    </location>
</feature>
<feature type="transmembrane region" description="Helical" evidence="4">
    <location>
        <begin position="179"/>
        <end position="199"/>
    </location>
</feature>
<feature type="topological domain" description="Lumenal" evidence="8">
    <location>
        <begin position="200"/>
        <end position="216"/>
    </location>
</feature>
<feature type="transmembrane region" description="Helical" evidence="4">
    <location>
        <begin position="217"/>
        <end position="237"/>
    </location>
</feature>
<feature type="topological domain" description="Cytoplasmic" evidence="8">
    <location>
        <begin position="238"/>
        <end position="275"/>
    </location>
</feature>
<feature type="transmembrane region" description="Helical" evidence="4">
    <location>
        <begin position="276"/>
        <end position="296"/>
    </location>
</feature>
<feature type="topological domain" description="Lumenal" evidence="8">
    <location>
        <begin position="297"/>
        <end position="311"/>
    </location>
</feature>
<feature type="transmembrane region" description="Helical" evidence="4">
    <location>
        <begin position="312"/>
        <end position="332"/>
    </location>
</feature>
<feature type="topological domain" description="Cytoplasmic" evidence="8">
    <location>
        <begin position="333"/>
        <end position="430"/>
    </location>
</feature>
<feature type="region of interest" description="Zinc binding" evidence="2">
    <location>
        <begin position="240"/>
        <end position="265"/>
    </location>
</feature>
<feature type="region of interest" description="Disordered" evidence="5">
    <location>
        <begin position="245"/>
        <end position="264"/>
    </location>
</feature>
<feature type="compositionally biased region" description="Low complexity" evidence="5">
    <location>
        <begin position="249"/>
        <end position="263"/>
    </location>
</feature>
<feature type="binding site" evidence="3">
    <location>
        <position position="146"/>
    </location>
    <ligand>
        <name>Zn(2+)</name>
        <dbReference type="ChEBI" id="CHEBI:29105"/>
        <note>transported zinc</note>
    </ligand>
</feature>
<feature type="binding site" evidence="3">
    <location>
        <position position="150"/>
    </location>
    <ligand>
        <name>Zn(2+)</name>
        <dbReference type="ChEBI" id="CHEBI:29105"/>
        <note>transported zinc</note>
    </ligand>
</feature>
<feature type="binding site" evidence="3">
    <location>
        <position position="278"/>
    </location>
    <ligand>
        <name>Zn(2+)</name>
        <dbReference type="ChEBI" id="CHEBI:29105"/>
        <note>transported zinc</note>
    </ligand>
</feature>
<feature type="binding site" evidence="3">
    <location>
        <position position="282"/>
    </location>
    <ligand>
        <name>Zn(2+)</name>
        <dbReference type="ChEBI" id="CHEBI:29105"/>
        <note>transported zinc</note>
    </ligand>
</feature>
<feature type="modified residue" description="Phosphoserine" evidence="11">
    <location>
        <position position="36"/>
    </location>
</feature>
<feature type="sequence conflict" description="In Ref. 1; AAB82593." evidence="8" ref="1">
    <original>H</original>
    <variation>Q</variation>
    <location>
        <position position="426"/>
    </location>
</feature>
<evidence type="ECO:0000250" key="1">
    <source>
        <dbReference type="UniProtKB" id="O14863"/>
    </source>
</evidence>
<evidence type="ECO:0000250" key="2">
    <source>
        <dbReference type="UniProtKB" id="O55174"/>
    </source>
</evidence>
<evidence type="ECO:0000250" key="3">
    <source>
        <dbReference type="UniProtKB" id="Q8IWU4"/>
    </source>
</evidence>
<evidence type="ECO:0000255" key="4"/>
<evidence type="ECO:0000256" key="5">
    <source>
        <dbReference type="SAM" id="MobiDB-lite"/>
    </source>
</evidence>
<evidence type="ECO:0000269" key="6">
    <source>
    </source>
</evidence>
<evidence type="ECO:0000303" key="7">
    <source>
    </source>
</evidence>
<evidence type="ECO:0000305" key="8"/>
<evidence type="ECO:0000305" key="9">
    <source>
    </source>
</evidence>
<evidence type="ECO:0000312" key="10">
    <source>
        <dbReference type="MGI" id="MGI:1345282"/>
    </source>
</evidence>
<evidence type="ECO:0007744" key="11">
    <source>
    </source>
</evidence>
<gene>
    <name evidence="10" type="primary">Slc30a4</name>
    <name type="synonym">Lm</name>
    <name evidence="7" type="synonym">Znt4</name>
</gene>
<keyword id="KW-0050">Antiport</keyword>
<keyword id="KW-0967">Endosome</keyword>
<keyword id="KW-0406">Ion transport</keyword>
<keyword id="KW-0458">Lysosome</keyword>
<keyword id="KW-0472">Membrane</keyword>
<keyword id="KW-0479">Metal-binding</keyword>
<keyword id="KW-0597">Phosphoprotein</keyword>
<keyword id="KW-1185">Reference proteome</keyword>
<keyword id="KW-0812">Transmembrane</keyword>
<keyword id="KW-1133">Transmembrane helix</keyword>
<keyword id="KW-0813">Transport</keyword>
<keyword id="KW-0862">Zinc</keyword>
<keyword id="KW-0864">Zinc transport</keyword>
<reference key="1">
    <citation type="journal article" date="1997" name="Nat. Genet.">
        <title>A novel gene involved in zinc transport is deficient in the lethal milk mouse.</title>
        <authorList>
            <person name="Huang L."/>
            <person name="Gitschier J."/>
        </authorList>
    </citation>
    <scope>NUCLEOTIDE SEQUENCE [GENOMIC DNA / MRNA]</scope>
    <scope>FUNCTION</scope>
    <scope>TRANSPORTER ACTIVITY</scope>
    <scope>DISEASE</scope>
    <scope>TISSUE SPECIFICITY</scope>
    <source>
        <strain>B6/CBAF1</strain>
        <strain>C57BL/6J</strain>
        <tissue>Brain</tissue>
    </source>
</reference>
<reference key="2">
    <citation type="journal article" date="2005" name="Science">
        <title>The transcriptional landscape of the mammalian genome.</title>
        <authorList>
            <person name="Carninci P."/>
            <person name="Kasukawa T."/>
            <person name="Katayama S."/>
            <person name="Gough J."/>
            <person name="Frith M.C."/>
            <person name="Maeda N."/>
            <person name="Oyama R."/>
            <person name="Ravasi T."/>
            <person name="Lenhard B."/>
            <person name="Wells C."/>
            <person name="Kodzius R."/>
            <person name="Shimokawa K."/>
            <person name="Bajic V.B."/>
            <person name="Brenner S.E."/>
            <person name="Batalov S."/>
            <person name="Forrest A.R."/>
            <person name="Zavolan M."/>
            <person name="Davis M.J."/>
            <person name="Wilming L.G."/>
            <person name="Aidinis V."/>
            <person name="Allen J.E."/>
            <person name="Ambesi-Impiombato A."/>
            <person name="Apweiler R."/>
            <person name="Aturaliya R.N."/>
            <person name="Bailey T.L."/>
            <person name="Bansal M."/>
            <person name="Baxter L."/>
            <person name="Beisel K.W."/>
            <person name="Bersano T."/>
            <person name="Bono H."/>
            <person name="Chalk A.M."/>
            <person name="Chiu K.P."/>
            <person name="Choudhary V."/>
            <person name="Christoffels A."/>
            <person name="Clutterbuck D.R."/>
            <person name="Crowe M.L."/>
            <person name="Dalla E."/>
            <person name="Dalrymple B.P."/>
            <person name="de Bono B."/>
            <person name="Della Gatta G."/>
            <person name="di Bernardo D."/>
            <person name="Down T."/>
            <person name="Engstrom P."/>
            <person name="Fagiolini M."/>
            <person name="Faulkner G."/>
            <person name="Fletcher C.F."/>
            <person name="Fukushima T."/>
            <person name="Furuno M."/>
            <person name="Futaki S."/>
            <person name="Gariboldi M."/>
            <person name="Georgii-Hemming P."/>
            <person name="Gingeras T.R."/>
            <person name="Gojobori T."/>
            <person name="Green R.E."/>
            <person name="Gustincich S."/>
            <person name="Harbers M."/>
            <person name="Hayashi Y."/>
            <person name="Hensch T.K."/>
            <person name="Hirokawa N."/>
            <person name="Hill D."/>
            <person name="Huminiecki L."/>
            <person name="Iacono M."/>
            <person name="Ikeo K."/>
            <person name="Iwama A."/>
            <person name="Ishikawa T."/>
            <person name="Jakt M."/>
            <person name="Kanapin A."/>
            <person name="Katoh M."/>
            <person name="Kawasawa Y."/>
            <person name="Kelso J."/>
            <person name="Kitamura H."/>
            <person name="Kitano H."/>
            <person name="Kollias G."/>
            <person name="Krishnan S.P."/>
            <person name="Kruger A."/>
            <person name="Kummerfeld S.K."/>
            <person name="Kurochkin I.V."/>
            <person name="Lareau L.F."/>
            <person name="Lazarevic D."/>
            <person name="Lipovich L."/>
            <person name="Liu J."/>
            <person name="Liuni S."/>
            <person name="McWilliam S."/>
            <person name="Madan Babu M."/>
            <person name="Madera M."/>
            <person name="Marchionni L."/>
            <person name="Matsuda H."/>
            <person name="Matsuzawa S."/>
            <person name="Miki H."/>
            <person name="Mignone F."/>
            <person name="Miyake S."/>
            <person name="Morris K."/>
            <person name="Mottagui-Tabar S."/>
            <person name="Mulder N."/>
            <person name="Nakano N."/>
            <person name="Nakauchi H."/>
            <person name="Ng P."/>
            <person name="Nilsson R."/>
            <person name="Nishiguchi S."/>
            <person name="Nishikawa S."/>
            <person name="Nori F."/>
            <person name="Ohara O."/>
            <person name="Okazaki Y."/>
            <person name="Orlando V."/>
            <person name="Pang K.C."/>
            <person name="Pavan W.J."/>
            <person name="Pavesi G."/>
            <person name="Pesole G."/>
            <person name="Petrovsky N."/>
            <person name="Piazza S."/>
            <person name="Reed J."/>
            <person name="Reid J.F."/>
            <person name="Ring B.Z."/>
            <person name="Ringwald M."/>
            <person name="Rost B."/>
            <person name="Ruan Y."/>
            <person name="Salzberg S.L."/>
            <person name="Sandelin A."/>
            <person name="Schneider C."/>
            <person name="Schoenbach C."/>
            <person name="Sekiguchi K."/>
            <person name="Semple C.A."/>
            <person name="Seno S."/>
            <person name="Sessa L."/>
            <person name="Sheng Y."/>
            <person name="Shibata Y."/>
            <person name="Shimada H."/>
            <person name="Shimada K."/>
            <person name="Silva D."/>
            <person name="Sinclair B."/>
            <person name="Sperling S."/>
            <person name="Stupka E."/>
            <person name="Sugiura K."/>
            <person name="Sultana R."/>
            <person name="Takenaka Y."/>
            <person name="Taki K."/>
            <person name="Tammoja K."/>
            <person name="Tan S.L."/>
            <person name="Tang S."/>
            <person name="Taylor M.S."/>
            <person name="Tegner J."/>
            <person name="Teichmann S.A."/>
            <person name="Ueda H.R."/>
            <person name="van Nimwegen E."/>
            <person name="Verardo R."/>
            <person name="Wei C.L."/>
            <person name="Yagi K."/>
            <person name="Yamanishi H."/>
            <person name="Zabarovsky E."/>
            <person name="Zhu S."/>
            <person name="Zimmer A."/>
            <person name="Hide W."/>
            <person name="Bult C."/>
            <person name="Grimmond S.M."/>
            <person name="Teasdale R.D."/>
            <person name="Liu E.T."/>
            <person name="Brusic V."/>
            <person name="Quackenbush J."/>
            <person name="Wahlestedt C."/>
            <person name="Mattick J.S."/>
            <person name="Hume D.A."/>
            <person name="Kai C."/>
            <person name="Sasaki D."/>
            <person name="Tomaru Y."/>
            <person name="Fukuda S."/>
            <person name="Kanamori-Katayama M."/>
            <person name="Suzuki M."/>
            <person name="Aoki J."/>
            <person name="Arakawa T."/>
            <person name="Iida J."/>
            <person name="Imamura K."/>
            <person name="Itoh M."/>
            <person name="Kato T."/>
            <person name="Kawaji H."/>
            <person name="Kawagashira N."/>
            <person name="Kawashima T."/>
            <person name="Kojima M."/>
            <person name="Kondo S."/>
            <person name="Konno H."/>
            <person name="Nakano K."/>
            <person name="Ninomiya N."/>
            <person name="Nishio T."/>
            <person name="Okada M."/>
            <person name="Plessy C."/>
            <person name="Shibata K."/>
            <person name="Shiraki T."/>
            <person name="Suzuki S."/>
            <person name="Tagami M."/>
            <person name="Waki K."/>
            <person name="Watahiki A."/>
            <person name="Okamura-Oho Y."/>
            <person name="Suzuki H."/>
            <person name="Kawai J."/>
            <person name="Hayashizaki Y."/>
        </authorList>
    </citation>
    <scope>NUCLEOTIDE SEQUENCE [LARGE SCALE MRNA]</scope>
    <source>
        <strain>C57BL/6J</strain>
        <tissue>Forelimb</tissue>
    </source>
</reference>
<reference key="3">
    <citation type="journal article" date="2009" name="PLoS Biol.">
        <title>Lineage-specific biology revealed by a finished genome assembly of the mouse.</title>
        <authorList>
            <person name="Church D.M."/>
            <person name="Goodstadt L."/>
            <person name="Hillier L.W."/>
            <person name="Zody M.C."/>
            <person name="Goldstein S."/>
            <person name="She X."/>
            <person name="Bult C.J."/>
            <person name="Agarwala R."/>
            <person name="Cherry J.L."/>
            <person name="DiCuccio M."/>
            <person name="Hlavina W."/>
            <person name="Kapustin Y."/>
            <person name="Meric P."/>
            <person name="Maglott D."/>
            <person name="Birtle Z."/>
            <person name="Marques A.C."/>
            <person name="Graves T."/>
            <person name="Zhou S."/>
            <person name="Teague B."/>
            <person name="Potamousis K."/>
            <person name="Churas C."/>
            <person name="Place M."/>
            <person name="Herschleb J."/>
            <person name="Runnheim R."/>
            <person name="Forrest D."/>
            <person name="Amos-Landgraf J."/>
            <person name="Schwartz D.C."/>
            <person name="Cheng Z."/>
            <person name="Lindblad-Toh K."/>
            <person name="Eichler E.E."/>
            <person name="Ponting C.P."/>
        </authorList>
    </citation>
    <scope>NUCLEOTIDE SEQUENCE [LARGE SCALE GENOMIC DNA]</scope>
    <source>
        <strain>C57BL/6J</strain>
    </source>
</reference>
<reference key="4">
    <citation type="journal article" date="2010" name="Cell">
        <title>A tissue-specific atlas of mouse protein phosphorylation and expression.</title>
        <authorList>
            <person name="Huttlin E.L."/>
            <person name="Jedrychowski M.P."/>
            <person name="Elias J.E."/>
            <person name="Goswami T."/>
            <person name="Rad R."/>
            <person name="Beausoleil S.A."/>
            <person name="Villen J."/>
            <person name="Haas W."/>
            <person name="Sowa M.E."/>
            <person name="Gygi S.P."/>
        </authorList>
    </citation>
    <scope>PHOSPHORYLATION [LARGE SCALE ANALYSIS] AT SER-36</scope>
    <scope>IDENTIFICATION BY MASS SPECTROMETRY [LARGE SCALE ANALYSIS]</scope>
    <source>
        <tissue>Kidney</tissue>
        <tissue>Pancreas</tissue>
        <tissue>Spleen</tissue>
    </source>
</reference>
<sequence length="430" mass="47800">MAGPGAWKRLKSLLRKDDTPLFLNDTSAFDFSDEVSDEGLSRFNKLRVVVADDDSEAPERPVNGAHPALQADDDSLLDQDLPLTNSQLSLKMDPCDNCSKRRELLKQRKVKTRLTIAAVLYLLFMIGELVGGYMANSLAIMTDALHMLTDLSAIILTLLALWLSSKSPTRRFTFGFHRLEVLSAMISVMLVYVLMGFLLYEAVQRTIHMNYEINGDVMLITAAVGVAVNVIMGFLLNQSGHHHSHAHSHSLPSNSPSMVSSGHNHGQDSLAVRAAFVHALGDLVQSVGVLIAAYIIRFKPEYKIADPICTYIFSLLVAFTTFRIIWDTVVIILEGVPSHLNVDYIKESLMKIEDVYSVEDLNIWSLTSGKSTAIVHMQLIPGSSSKWEEVQSKAKHLLLNTFGMYKCTIQLQSYRQEVIRTCANCHSSST</sequence>
<protein>
    <recommendedName>
        <fullName evidence="9">Probable proton-coupled zinc antiporter SLC30A4</fullName>
    </recommendedName>
    <alternativeName>
        <fullName evidence="7">Lethal milk protein</fullName>
    </alternativeName>
    <alternativeName>
        <fullName evidence="10">Solute carrier family 30 member 4</fullName>
    </alternativeName>
    <alternativeName>
        <fullName evidence="9">Zinc transporter 4</fullName>
        <shortName>ZnT-4</shortName>
    </alternativeName>
</protein>
<comment type="function">
    <text evidence="6">Probable proton-coupled zinc ion antiporter mediating zinc import from cytoplasm potentially into the endocytic compartment (PubMed:9354792). Controls zinc deposition in milk (PubMed:9354792).</text>
</comment>
<comment type="catalytic activity">
    <reaction evidence="9">
        <text>Zn(2+)(in) + 2 H(+)(out) = Zn(2+)(out) + 2 H(+)(in)</text>
        <dbReference type="Rhea" id="RHEA:72627"/>
        <dbReference type="ChEBI" id="CHEBI:15378"/>
        <dbReference type="ChEBI" id="CHEBI:29105"/>
    </reaction>
</comment>
<comment type="subunit">
    <text evidence="1">Homodimerization could regulate efficiency for zinc transport. Interacts with TMEM163 (By similarity).</text>
</comment>
<comment type="subcellular location">
    <subcellularLocation>
        <location evidence="2">Endosome membrane</location>
        <topology evidence="4">Multi-pass membrane protein</topology>
    </subcellularLocation>
    <subcellularLocation>
        <location evidence="1">Late endosome membrane</location>
        <topology evidence="4">Multi-pass membrane protein</topology>
    </subcellularLocation>
    <subcellularLocation>
        <location evidence="1">Lysosome membrane</location>
        <topology evidence="4">Multi-pass membrane protein</topology>
    </subcellularLocation>
    <text evidence="2">Enriched in vesicles within the basal region of epithelial cells.</text>
</comment>
<comment type="tissue specificity">
    <text evidence="6">Widely expressed. Highly expressed in the brain and in mammary epithelial cell lines.</text>
</comment>
<comment type="disease">
    <text evidence="6">Defect in Slc30a4 is the cause of the lethal milk (lm) phenotype. Mice with lm are defective in zinc transport into breast milk, due to a premature translation termination codon at position 297. Only homozygous mutant adults develop dermatitis, skin lesions, and hair loss due to a systemic zinc deficiency. Pups of any genotype suckled on homozygous mutant female also develop symptoms characteristic of nutritional zinc deficiency, including dermatitis, alopecia and stunted growth.</text>
</comment>
<comment type="similarity">
    <text evidence="8">Belongs to the cation diffusion facilitator (CDF) transporter (TC 2.A.4) family. SLC30A subfamily.</text>
</comment>
<accession>O35149</accession>
<accession>O35154</accession>
<accession>Q3UYZ9</accession>
<name>ZNT4_MOUSE</name>
<organism>
    <name type="scientific">Mus musculus</name>
    <name type="common">Mouse</name>
    <dbReference type="NCBI Taxonomy" id="10090"/>
    <lineage>
        <taxon>Eukaryota</taxon>
        <taxon>Metazoa</taxon>
        <taxon>Chordata</taxon>
        <taxon>Craniata</taxon>
        <taxon>Vertebrata</taxon>
        <taxon>Euteleostomi</taxon>
        <taxon>Mammalia</taxon>
        <taxon>Eutheria</taxon>
        <taxon>Euarchontoglires</taxon>
        <taxon>Glires</taxon>
        <taxon>Rodentia</taxon>
        <taxon>Myomorpha</taxon>
        <taxon>Muroidea</taxon>
        <taxon>Muridae</taxon>
        <taxon>Murinae</taxon>
        <taxon>Mus</taxon>
        <taxon>Mus</taxon>
    </lineage>
</organism>